<gene>
    <name type="ORF">ORF63</name>
</gene>
<gene>
    <name type="ORF">ORF70</name>
</gene>
<organism>
    <name type="scientific">Varicella-zoster virus (strain Dumas)</name>
    <name type="common">HHV-3</name>
    <name type="synonym">Human herpesvirus 3</name>
    <dbReference type="NCBI Taxonomy" id="10338"/>
    <lineage>
        <taxon>Viruses</taxon>
        <taxon>Duplodnaviria</taxon>
        <taxon>Heunggongvirae</taxon>
        <taxon>Peploviricota</taxon>
        <taxon>Herviviricetes</taxon>
        <taxon>Herpesvirales</taxon>
        <taxon>Orthoherpesviridae</taxon>
        <taxon>Alphaherpesvirinae</taxon>
        <taxon>Varicellovirus</taxon>
        <taxon>Varicellovirus humanalpha3</taxon>
        <taxon>Human herpesvirus 3</taxon>
    </lineage>
</organism>
<protein>
    <recommendedName>
        <fullName>Transcriptional regulator ICP22 homolog</fullName>
    </recommendedName>
    <alternativeName>
        <fullName>Immediate-early protein 63</fullName>
        <shortName>IE63</shortName>
    </alternativeName>
    <alternativeName>
        <fullName>Transcriptional regulator IE63</fullName>
    </alternativeName>
</protein>
<feature type="chain" id="PRO_0000115843" description="Transcriptional regulator ICP22 homolog">
    <location>
        <begin position="1"/>
        <end position="278"/>
    </location>
</feature>
<feature type="region of interest" description="IE62-binding">
    <location>
        <begin position="1"/>
        <end position="142"/>
    </location>
</feature>
<feature type="region of interest" description="Disordered" evidence="1">
    <location>
        <begin position="1"/>
        <end position="42"/>
    </location>
</feature>
<feature type="region of interest" description="Disordered" evidence="1">
    <location>
        <begin position="154"/>
        <end position="229"/>
    </location>
</feature>
<feature type="compositionally biased region" description="Acidic residues" evidence="1">
    <location>
        <begin position="155"/>
        <end position="169"/>
    </location>
</feature>
<feature type="compositionally biased region" description="Acidic residues" evidence="1">
    <location>
        <begin position="183"/>
        <end position="205"/>
    </location>
</feature>
<name>ICP22_VZVD</name>
<proteinExistence type="evidence at protein level"/>
<keyword id="KW-0244">Early protein</keyword>
<keyword id="KW-1262">Eukaryotic host gene expression shutoff by virus</keyword>
<keyword id="KW-1191">Eukaryotic host transcription shutoff by virus</keyword>
<keyword id="KW-1035">Host cytoplasm</keyword>
<keyword id="KW-1190">Host gene expression shutoff by virus</keyword>
<keyword id="KW-1048">Host nucleus</keyword>
<keyword id="KW-0945">Host-virus interaction</keyword>
<keyword id="KW-1111">Inhibition of eukaryotic host transcription initiation by virus</keyword>
<keyword id="KW-1104">Inhibition of host RNA polymerase II by virus</keyword>
<keyword id="KW-1185">Reference proteome</keyword>
<keyword id="KW-0804">Transcription</keyword>
<keyword id="KW-0805">Transcription regulation</keyword>
<keyword id="KW-0946">Virion</keyword>
<keyword id="KW-0920">Virion tegument</keyword>
<reference key="1">
    <citation type="journal article" date="1986" name="J. Gen. Virol.">
        <title>The complete DNA sequence of varicella-zoster virus.</title>
        <authorList>
            <person name="Davison A.J."/>
            <person name="Scott J.E."/>
        </authorList>
    </citation>
    <scope>NUCLEOTIDE SEQUENCE [LARGE SCALE GENOMIC DNA]</scope>
</reference>
<reference key="2">
    <citation type="journal article" date="1985" name="J. Gen. Virol.">
        <title>DNA sequence of the major inverted repeat in the varicella-zoster virus genome.</title>
        <authorList>
            <person name="Davison A.J."/>
            <person name="Scott J.E."/>
        </authorList>
    </citation>
    <scope>NUCLEOTIDE SEQUENCE [GENOMIC DNA]</scope>
</reference>
<reference key="3">
    <citation type="journal article" date="1992" name="J. Virol.">
        <title>Characterization of regulatory functions of the varicella-zoster virus gene 63-encoded protein.</title>
        <authorList>
            <person name="Jackers P."/>
            <person name="Defechereux P."/>
            <person name="Baudoux L."/>
            <person name="Lambert C."/>
            <person name="Massaer M."/>
            <person name="Merville-Louis M.P."/>
            <person name="Rentier B."/>
            <person name="Piette J."/>
        </authorList>
    </citation>
    <scope>FUNCTION</scope>
</reference>
<reference key="4">
    <citation type="journal article" date="1998" name="Proc. Natl. Acad. Sci. U.S.A.">
        <title>Aberrant intracellular localization of Varicella-Zoster virus regulatory proteins during latency.</title>
        <authorList>
            <person name="Lungu O."/>
            <person name="Panagiotidis C.A."/>
            <person name="Annunziato P.W."/>
            <person name="Gershon A.A."/>
            <person name="Silverstein S.J."/>
        </authorList>
    </citation>
    <scope>SUBCELLULAR LOCATION</scope>
</reference>
<reference key="5">
    <citation type="journal article" date="2001" name="J. Virol.">
        <title>Varicella-zoster virus ORF47 protein serine kinase: characterization of a cloned, biologically active phosphotransferase and two viral substrates, ORF62 and ORF63.</title>
        <authorList>
            <person name="Kenyon T.K."/>
            <person name="Lynch J.M."/>
            <person name="Hay J."/>
            <person name="Ruyechan W.T."/>
            <person name="Grose C."/>
        </authorList>
    </citation>
    <scope>PHOSPHORYLATION BY ORF47 PROTEIN SERINE KINASE</scope>
</reference>
<reference key="6">
    <citation type="journal article" date="2002" name="Virology">
        <title>Physical and functional interaction between the varicella zoster virus IE63 and IE62 proteins.</title>
        <authorList>
            <person name="Lynch J.M."/>
            <person name="Kenyon T.K."/>
            <person name="Grose C."/>
            <person name="Hay J."/>
            <person name="Ruyechan W.T."/>
        </authorList>
    </citation>
    <scope>INTERACTION WITH IE62</scope>
</reference>
<reference key="7">
    <citation type="journal article" date="2005" name="Biol. Chem.">
        <title>Varicella-zoster virus IE63 protein represses the basal transcription machinery by disorganizing the pre-initiation complex.</title>
        <authorList>
            <person name="Di Valentin E."/>
            <person name="Bontems S."/>
            <person name="Habran L."/>
            <person name="Jolois O."/>
            <person name="Markine-Goriaynoff N."/>
            <person name="Vanderplasschen A."/>
            <person name="Sadzot-Delvaux C."/>
            <person name="Piette J."/>
        </authorList>
    </citation>
    <scope>FUNCTION</scope>
    <scope>INTERACTION WITH HOST GTF2E1; GTF2H2 AND POLR2A</scope>
</reference>
<reference key="8">
    <citation type="journal article" date="2009" name="J. Virol.">
        <title>Varicella-zoster virus immediate-early 63 protein interacts with human antisilencing function 1 protein and alters its ability to bind histones h3.1 and h3.3.</title>
        <authorList>
            <person name="Ambagala A.P."/>
            <person name="Bosma T."/>
            <person name="Ali M.A."/>
            <person name="Poustovoitov M."/>
            <person name="Chen J.J."/>
            <person name="Gershon M.D."/>
            <person name="Adams P.D."/>
            <person name="Cohen J.I."/>
        </authorList>
    </citation>
    <scope>INTERACTION WITH HOST ASF1A</scope>
</reference>
<comment type="function">
    <text evidence="4 5">Immediate early (EI) protein that functions as a transcriptional regulator of cellular and viral mRNAs mainly by interacting with several general transcription factors thereby disorganizing the preinitiation complex at certain promoters. May additionally help to regulate levels of histones in virus-infected cells by interacting with host ASF1. By inhibiting host transcriptional program, IE63 plays a major role in the ability of VZV to overcome the innate immune response to the virus.</text>
</comment>
<comment type="subunit">
    <text evidence="3 5 6">Interacts with IE62; this interaction modulates the function of IE62. Interacts with several components of host pre-initiation complex including GTF2E1, GTF2H2 and POLR2A; these interactions lead to repression of gene transcription. Interacts with host ASF1A; altering its ability to bind histones.</text>
</comment>
<comment type="subcellular location">
    <subcellularLocation>
        <location evidence="7">Host cytoplasm</location>
    </subcellularLocation>
    <subcellularLocation>
        <location evidence="7">Host nucleus</location>
    </subcellularLocation>
    <subcellularLocation>
        <location evidence="7">Virion tegument</location>
    </subcellularLocation>
    <text>During the first stage of infection, IE63 is mostly expressed in the nucleus and also slightly in the cytoplasm, and during latency, IE63 localizes in the cytoplasm quite exclusively.</text>
</comment>
<comment type="PTM">
    <text evidence="2">Phosphorylated in vitro by host and by protein kinase ORF47.</text>
</comment>
<comment type="similarity">
    <text evidence="8">Belongs to the herpesviridae ICP22 family.</text>
</comment>
<sequence length="278" mass="30495">MFCTSPATRGDSSESKPGASVDVNGKMEYGSAPGPLNGRDTSRGPGAFCTPGWEIHPARLVEDINRVFLCIAQSSGRVTRDSRRLRRICLDFYLMGRTRQRPTLACWEELLQLQPTQTQCLRATLMEVSHRPPRGEDGFIEAPNVPLHRSALECDVSDDGGEDDSDDDGSTPSDVIEFRDSDAESSDGEDFIVEEESEESTDSCEPDGVPGDCYRDGDGCNTPSPKRPQRAIERYAGAETAEYTAAKALTALGEGGVDWKRRRHEAPRRHDIPPPHGV</sequence>
<accession>P09255</accession>
<organismHost>
    <name type="scientific">Homo sapiens</name>
    <name type="common">Human</name>
    <dbReference type="NCBI Taxonomy" id="9606"/>
</organismHost>
<evidence type="ECO:0000256" key="1">
    <source>
        <dbReference type="SAM" id="MobiDB-lite"/>
    </source>
</evidence>
<evidence type="ECO:0000269" key="2">
    <source>
    </source>
</evidence>
<evidence type="ECO:0000269" key="3">
    <source>
    </source>
</evidence>
<evidence type="ECO:0000269" key="4">
    <source>
    </source>
</evidence>
<evidence type="ECO:0000269" key="5">
    <source>
    </source>
</evidence>
<evidence type="ECO:0000269" key="6">
    <source>
    </source>
</evidence>
<evidence type="ECO:0000269" key="7">
    <source>
    </source>
</evidence>
<evidence type="ECO:0000305" key="8"/>
<dbReference type="EMBL" id="X04370">
    <property type="protein sequence ID" value="CAA27953.1"/>
    <property type="molecule type" value="Genomic_DNA"/>
</dbReference>
<dbReference type="EMBL" id="X04370">
    <property type="protein sequence ID" value="CAA27946.1"/>
    <property type="molecule type" value="Genomic_DNA"/>
</dbReference>
<dbReference type="EMBL" id="X02132">
    <property type="protein sequence ID" value="CAA26045.1"/>
    <property type="molecule type" value="Genomic_DNA"/>
</dbReference>
<dbReference type="PIR" id="B27345">
    <property type="entry name" value="EDBE63"/>
</dbReference>
<dbReference type="RefSeq" id="NP_040185.1">
    <property type="nucleotide sequence ID" value="NC_001348.1"/>
</dbReference>
<dbReference type="RefSeq" id="NP_040192.1">
    <property type="nucleotide sequence ID" value="NC_001348.1"/>
</dbReference>
<dbReference type="BioGRID" id="971533">
    <property type="interactions" value="3"/>
</dbReference>
<dbReference type="iPTMnet" id="P09255"/>
<dbReference type="GeneID" id="1487700"/>
<dbReference type="GeneID" id="1487711"/>
<dbReference type="KEGG" id="vg:1487700"/>
<dbReference type="KEGG" id="vg:1487711"/>
<dbReference type="Proteomes" id="UP000002602">
    <property type="component" value="Genome"/>
</dbReference>
<dbReference type="GO" id="GO:0030430">
    <property type="term" value="C:host cell cytoplasm"/>
    <property type="evidence" value="ECO:0007669"/>
    <property type="project" value="UniProtKB-SubCell"/>
</dbReference>
<dbReference type="GO" id="GO:0042025">
    <property type="term" value="C:host cell nucleus"/>
    <property type="evidence" value="ECO:0007669"/>
    <property type="project" value="UniProtKB-SubCell"/>
</dbReference>
<dbReference type="GO" id="GO:0019033">
    <property type="term" value="C:viral tegument"/>
    <property type="evidence" value="ECO:0007669"/>
    <property type="project" value="UniProtKB-SubCell"/>
</dbReference>
<dbReference type="GO" id="GO:0010468">
    <property type="term" value="P:regulation of gene expression"/>
    <property type="evidence" value="ECO:0007669"/>
    <property type="project" value="InterPro"/>
</dbReference>
<dbReference type="GO" id="GO:0039657">
    <property type="term" value="P:symbiont-mediated suppression of host gene expression"/>
    <property type="evidence" value="ECO:0007669"/>
    <property type="project" value="UniProtKB-KW"/>
</dbReference>
<dbReference type="GO" id="GO:0039523">
    <property type="term" value="P:symbiont-mediated suppression of host mRNA transcription via inhibition of RNA polymerase II activity"/>
    <property type="evidence" value="ECO:0007669"/>
    <property type="project" value="UniProtKB-KW"/>
</dbReference>
<dbReference type="GO" id="GO:0141154">
    <property type="term" value="P:symbiont-mediated suppression of host-directed shutoff of host translation"/>
    <property type="evidence" value="ECO:0000269"/>
    <property type="project" value="SigSci"/>
</dbReference>
<dbReference type="InterPro" id="IPR003403">
    <property type="entry name" value="IE68"/>
</dbReference>
<dbReference type="Pfam" id="PF02479">
    <property type="entry name" value="Herpes_IE68"/>
    <property type="match status" value="1"/>
</dbReference>